<feature type="chain" id="PRO_1000194210" description="Small ribosomal subunit protein uS12">
    <location>
        <begin position="1"/>
        <end position="124"/>
    </location>
</feature>
<feature type="modified residue" description="3-methylthioaspartic acid" evidence="1">
    <location>
        <position position="89"/>
    </location>
</feature>
<name>RS12_PROMH</name>
<comment type="function">
    <text evidence="2">With S4 and S5 plays an important role in translational accuracy.</text>
</comment>
<comment type="function">
    <text evidence="2">Interacts with and stabilizes bases of the 16S rRNA that are involved in tRNA selection in the A site and with the mRNA backbone. Located at the interface of the 30S and 50S subunits, it traverses the body of the 30S subunit contacting proteins on the other side and probably holding the rRNA structure together. The combined cluster of proteins S8, S12 and S17 appears to hold together the shoulder and platform of the 30S subunit.</text>
</comment>
<comment type="subunit">
    <text evidence="2">Part of the 30S ribosomal subunit. Contacts proteins S8 and S17. May interact with IF1 in the 30S initiation complex.</text>
</comment>
<comment type="similarity">
    <text evidence="2">Belongs to the universal ribosomal protein uS12 family.</text>
</comment>
<accession>B4EYV9</accession>
<keyword id="KW-0488">Methylation</keyword>
<keyword id="KW-1185">Reference proteome</keyword>
<keyword id="KW-0687">Ribonucleoprotein</keyword>
<keyword id="KW-0689">Ribosomal protein</keyword>
<keyword id="KW-0694">RNA-binding</keyword>
<keyword id="KW-0699">rRNA-binding</keyword>
<keyword id="KW-0820">tRNA-binding</keyword>
<proteinExistence type="inferred from homology"/>
<sequence length="124" mass="13660">MATINQLVRKSRSSKVVKSNVPALEACPQKRGVCTRVYTTTPKKPNSALRKVCRVRLTNGFEVSSYIGGEGHNLQEHSVILIRGGRVKDLPGVRYHTVRGALDCSGVKDRKQGRSKYGVKKPKA</sequence>
<gene>
    <name evidence="2" type="primary">rpsL</name>
    <name type="ordered locus">PMI2795</name>
</gene>
<evidence type="ECO:0000250" key="1"/>
<evidence type="ECO:0000255" key="2">
    <source>
        <dbReference type="HAMAP-Rule" id="MF_00403"/>
    </source>
</evidence>
<evidence type="ECO:0000305" key="3"/>
<organism>
    <name type="scientific">Proteus mirabilis (strain HI4320)</name>
    <dbReference type="NCBI Taxonomy" id="529507"/>
    <lineage>
        <taxon>Bacteria</taxon>
        <taxon>Pseudomonadati</taxon>
        <taxon>Pseudomonadota</taxon>
        <taxon>Gammaproteobacteria</taxon>
        <taxon>Enterobacterales</taxon>
        <taxon>Morganellaceae</taxon>
        <taxon>Proteus</taxon>
    </lineage>
</organism>
<protein>
    <recommendedName>
        <fullName evidence="2">Small ribosomal subunit protein uS12</fullName>
    </recommendedName>
    <alternativeName>
        <fullName evidence="3">30S ribosomal protein S12</fullName>
    </alternativeName>
</protein>
<dbReference type="EMBL" id="AM942759">
    <property type="protein sequence ID" value="CAR45510.1"/>
    <property type="molecule type" value="Genomic_DNA"/>
</dbReference>
<dbReference type="RefSeq" id="WP_004246896.1">
    <property type="nucleotide sequence ID" value="NC_010554.1"/>
</dbReference>
<dbReference type="SMR" id="B4EYV9"/>
<dbReference type="EnsemblBacteria" id="CAR45510">
    <property type="protein sequence ID" value="CAR45510"/>
    <property type="gene ID" value="PMI2795"/>
</dbReference>
<dbReference type="GeneID" id="93908985"/>
<dbReference type="KEGG" id="pmr:PMI2795"/>
<dbReference type="eggNOG" id="COG0048">
    <property type="taxonomic scope" value="Bacteria"/>
</dbReference>
<dbReference type="HOGENOM" id="CLU_104295_1_2_6"/>
<dbReference type="Proteomes" id="UP000008319">
    <property type="component" value="Chromosome"/>
</dbReference>
<dbReference type="GO" id="GO:0015935">
    <property type="term" value="C:small ribosomal subunit"/>
    <property type="evidence" value="ECO:0007669"/>
    <property type="project" value="InterPro"/>
</dbReference>
<dbReference type="GO" id="GO:0019843">
    <property type="term" value="F:rRNA binding"/>
    <property type="evidence" value="ECO:0007669"/>
    <property type="project" value="UniProtKB-UniRule"/>
</dbReference>
<dbReference type="GO" id="GO:0003735">
    <property type="term" value="F:structural constituent of ribosome"/>
    <property type="evidence" value="ECO:0007669"/>
    <property type="project" value="InterPro"/>
</dbReference>
<dbReference type="GO" id="GO:0000049">
    <property type="term" value="F:tRNA binding"/>
    <property type="evidence" value="ECO:0007669"/>
    <property type="project" value="UniProtKB-UniRule"/>
</dbReference>
<dbReference type="GO" id="GO:0006412">
    <property type="term" value="P:translation"/>
    <property type="evidence" value="ECO:0007669"/>
    <property type="project" value="UniProtKB-UniRule"/>
</dbReference>
<dbReference type="CDD" id="cd03368">
    <property type="entry name" value="Ribosomal_S12"/>
    <property type="match status" value="1"/>
</dbReference>
<dbReference type="FunFam" id="2.40.50.140:FF:000001">
    <property type="entry name" value="30S ribosomal protein S12"/>
    <property type="match status" value="1"/>
</dbReference>
<dbReference type="Gene3D" id="2.40.50.140">
    <property type="entry name" value="Nucleic acid-binding proteins"/>
    <property type="match status" value="1"/>
</dbReference>
<dbReference type="HAMAP" id="MF_00403_B">
    <property type="entry name" value="Ribosomal_uS12_B"/>
    <property type="match status" value="1"/>
</dbReference>
<dbReference type="InterPro" id="IPR012340">
    <property type="entry name" value="NA-bd_OB-fold"/>
</dbReference>
<dbReference type="InterPro" id="IPR006032">
    <property type="entry name" value="Ribosomal_uS12"/>
</dbReference>
<dbReference type="InterPro" id="IPR005679">
    <property type="entry name" value="Ribosomal_uS12_bac"/>
</dbReference>
<dbReference type="NCBIfam" id="TIGR00981">
    <property type="entry name" value="rpsL_bact"/>
    <property type="match status" value="1"/>
</dbReference>
<dbReference type="PANTHER" id="PTHR11652">
    <property type="entry name" value="30S RIBOSOMAL PROTEIN S12 FAMILY MEMBER"/>
    <property type="match status" value="1"/>
</dbReference>
<dbReference type="Pfam" id="PF00164">
    <property type="entry name" value="Ribosom_S12_S23"/>
    <property type="match status" value="1"/>
</dbReference>
<dbReference type="PIRSF" id="PIRSF002133">
    <property type="entry name" value="Ribosomal_S12/S23"/>
    <property type="match status" value="1"/>
</dbReference>
<dbReference type="PRINTS" id="PR01034">
    <property type="entry name" value="RIBOSOMALS12"/>
</dbReference>
<dbReference type="SUPFAM" id="SSF50249">
    <property type="entry name" value="Nucleic acid-binding proteins"/>
    <property type="match status" value="1"/>
</dbReference>
<dbReference type="PROSITE" id="PS00055">
    <property type="entry name" value="RIBOSOMAL_S12"/>
    <property type="match status" value="1"/>
</dbReference>
<reference key="1">
    <citation type="journal article" date="2008" name="J. Bacteriol.">
        <title>Complete genome sequence of uropathogenic Proteus mirabilis, a master of both adherence and motility.</title>
        <authorList>
            <person name="Pearson M.M."/>
            <person name="Sebaihia M."/>
            <person name="Churcher C."/>
            <person name="Quail M.A."/>
            <person name="Seshasayee A.S."/>
            <person name="Luscombe N.M."/>
            <person name="Abdellah Z."/>
            <person name="Arrosmith C."/>
            <person name="Atkin B."/>
            <person name="Chillingworth T."/>
            <person name="Hauser H."/>
            <person name="Jagels K."/>
            <person name="Moule S."/>
            <person name="Mungall K."/>
            <person name="Norbertczak H."/>
            <person name="Rabbinowitsch E."/>
            <person name="Walker D."/>
            <person name="Whithead S."/>
            <person name="Thomson N.R."/>
            <person name="Rather P.N."/>
            <person name="Parkhill J."/>
            <person name="Mobley H.L.T."/>
        </authorList>
    </citation>
    <scope>NUCLEOTIDE SEQUENCE [LARGE SCALE GENOMIC DNA]</scope>
    <source>
        <strain>HI4320</strain>
    </source>
</reference>